<keyword id="KW-0175">Coiled coil</keyword>
<keyword id="KW-0238">DNA-binding</keyword>
<keyword id="KW-1185">Reference proteome</keyword>
<keyword id="KW-0804">Transcription</keyword>
<keyword id="KW-0805">Transcription regulation</keyword>
<accession>Q5WHM1</accession>
<name>GREA_SHOC1</name>
<organism>
    <name type="scientific">Shouchella clausii (strain KSM-K16)</name>
    <name type="common">Alkalihalobacillus clausii</name>
    <dbReference type="NCBI Taxonomy" id="66692"/>
    <lineage>
        <taxon>Bacteria</taxon>
        <taxon>Bacillati</taxon>
        <taxon>Bacillota</taxon>
        <taxon>Bacilli</taxon>
        <taxon>Bacillales</taxon>
        <taxon>Bacillaceae</taxon>
        <taxon>Shouchella</taxon>
    </lineage>
</organism>
<reference key="1">
    <citation type="submission" date="2003-10" db="EMBL/GenBank/DDBJ databases">
        <title>The complete genome sequence of the alkaliphilic Bacillus clausii KSM-K16.</title>
        <authorList>
            <person name="Takaki Y."/>
            <person name="Kageyama Y."/>
            <person name="Shimamura S."/>
            <person name="Suzuki H."/>
            <person name="Nishi S."/>
            <person name="Hatada Y."/>
            <person name="Kawai S."/>
            <person name="Ito S."/>
            <person name="Horikoshi K."/>
        </authorList>
    </citation>
    <scope>NUCLEOTIDE SEQUENCE [LARGE SCALE GENOMIC DNA]</scope>
    <source>
        <strain>KSM-K16</strain>
    </source>
</reference>
<comment type="function">
    <text evidence="1">Necessary for efficient RNA polymerase transcription elongation past template-encoded arresting sites. The arresting sites in DNA have the property of trapping a certain fraction of elongating RNA polymerases that pass through, resulting in locked ternary complexes. Cleavage of the nascent transcript by cleavage factors such as GreA or GreB allows the resumption of elongation from the new 3'terminus. GreA releases sequences of 2 to 3 nucleotides.</text>
</comment>
<comment type="similarity">
    <text evidence="1">Belongs to the GreA/GreB family.</text>
</comment>
<protein>
    <recommendedName>
        <fullName evidence="1">Transcription elongation factor GreA</fullName>
    </recommendedName>
    <alternativeName>
        <fullName evidence="1">Transcript cleavage factor GreA</fullName>
    </alternativeName>
</protein>
<dbReference type="EMBL" id="AP006627">
    <property type="protein sequence ID" value="BAD64134.1"/>
    <property type="molecule type" value="Genomic_DNA"/>
</dbReference>
<dbReference type="RefSeq" id="WP_011246443.1">
    <property type="nucleotide sequence ID" value="NC_006582.1"/>
</dbReference>
<dbReference type="SMR" id="Q5WHM1"/>
<dbReference type="STRING" id="66692.ABC1599"/>
<dbReference type="KEGG" id="bcl:ABC1599"/>
<dbReference type="eggNOG" id="COG0782">
    <property type="taxonomic scope" value="Bacteria"/>
</dbReference>
<dbReference type="HOGENOM" id="CLU_101379_2_1_9"/>
<dbReference type="OrthoDB" id="9808774at2"/>
<dbReference type="Proteomes" id="UP000001168">
    <property type="component" value="Chromosome"/>
</dbReference>
<dbReference type="GO" id="GO:0003677">
    <property type="term" value="F:DNA binding"/>
    <property type="evidence" value="ECO:0007669"/>
    <property type="project" value="UniProtKB-UniRule"/>
</dbReference>
<dbReference type="GO" id="GO:0070063">
    <property type="term" value="F:RNA polymerase binding"/>
    <property type="evidence" value="ECO:0007669"/>
    <property type="project" value="InterPro"/>
</dbReference>
<dbReference type="GO" id="GO:0006354">
    <property type="term" value="P:DNA-templated transcription elongation"/>
    <property type="evidence" value="ECO:0007669"/>
    <property type="project" value="TreeGrafter"/>
</dbReference>
<dbReference type="GO" id="GO:0032784">
    <property type="term" value="P:regulation of DNA-templated transcription elongation"/>
    <property type="evidence" value="ECO:0007669"/>
    <property type="project" value="UniProtKB-UniRule"/>
</dbReference>
<dbReference type="FunFam" id="1.10.287.180:FF:000001">
    <property type="entry name" value="Transcription elongation factor GreA"/>
    <property type="match status" value="1"/>
</dbReference>
<dbReference type="FunFam" id="3.10.50.30:FF:000001">
    <property type="entry name" value="Transcription elongation factor GreA"/>
    <property type="match status" value="1"/>
</dbReference>
<dbReference type="Gene3D" id="3.10.50.30">
    <property type="entry name" value="Transcription elongation factor, GreA/GreB, C-terminal domain"/>
    <property type="match status" value="1"/>
</dbReference>
<dbReference type="Gene3D" id="1.10.287.180">
    <property type="entry name" value="Transcription elongation factor, GreA/GreB, N-terminal domain"/>
    <property type="match status" value="1"/>
</dbReference>
<dbReference type="HAMAP" id="MF_00105">
    <property type="entry name" value="GreA_GreB"/>
    <property type="match status" value="1"/>
</dbReference>
<dbReference type="InterPro" id="IPR036953">
    <property type="entry name" value="GreA/GreB_C_sf"/>
</dbReference>
<dbReference type="InterPro" id="IPR018151">
    <property type="entry name" value="TF_GreA/GreB_CS"/>
</dbReference>
<dbReference type="InterPro" id="IPR006359">
    <property type="entry name" value="Tscrpt_elong_fac_GreA"/>
</dbReference>
<dbReference type="InterPro" id="IPR028624">
    <property type="entry name" value="Tscrpt_elong_fac_GreA/B"/>
</dbReference>
<dbReference type="InterPro" id="IPR001437">
    <property type="entry name" value="Tscrpt_elong_fac_GreA/B_C"/>
</dbReference>
<dbReference type="InterPro" id="IPR023459">
    <property type="entry name" value="Tscrpt_elong_fac_GreA/B_fam"/>
</dbReference>
<dbReference type="InterPro" id="IPR022691">
    <property type="entry name" value="Tscrpt_elong_fac_GreA/B_N"/>
</dbReference>
<dbReference type="InterPro" id="IPR036805">
    <property type="entry name" value="Tscrpt_elong_fac_GreA/B_N_sf"/>
</dbReference>
<dbReference type="NCBIfam" id="TIGR01462">
    <property type="entry name" value="greA"/>
    <property type="match status" value="1"/>
</dbReference>
<dbReference type="NCBIfam" id="NF001263">
    <property type="entry name" value="PRK00226.1-4"/>
    <property type="match status" value="1"/>
</dbReference>
<dbReference type="PANTHER" id="PTHR30437">
    <property type="entry name" value="TRANSCRIPTION ELONGATION FACTOR GREA"/>
    <property type="match status" value="1"/>
</dbReference>
<dbReference type="PANTHER" id="PTHR30437:SF4">
    <property type="entry name" value="TRANSCRIPTION ELONGATION FACTOR GREA"/>
    <property type="match status" value="1"/>
</dbReference>
<dbReference type="Pfam" id="PF01272">
    <property type="entry name" value="GreA_GreB"/>
    <property type="match status" value="1"/>
</dbReference>
<dbReference type="Pfam" id="PF03449">
    <property type="entry name" value="GreA_GreB_N"/>
    <property type="match status" value="1"/>
</dbReference>
<dbReference type="PIRSF" id="PIRSF006092">
    <property type="entry name" value="GreA_GreB"/>
    <property type="match status" value="1"/>
</dbReference>
<dbReference type="SUPFAM" id="SSF54534">
    <property type="entry name" value="FKBP-like"/>
    <property type="match status" value="1"/>
</dbReference>
<dbReference type="SUPFAM" id="SSF46557">
    <property type="entry name" value="GreA transcript cleavage protein, N-terminal domain"/>
    <property type="match status" value="1"/>
</dbReference>
<dbReference type="PROSITE" id="PS00829">
    <property type="entry name" value="GREAB_1"/>
    <property type="match status" value="1"/>
</dbReference>
<dbReference type="PROSITE" id="PS00830">
    <property type="entry name" value="GREAB_2"/>
    <property type="match status" value="1"/>
</dbReference>
<sequence>MAEEKKHYMTAEGKKKLEEELHYLITTRRKEVVERIKVARSFGDLSENSEYDSAKEDQAFVEGRIAQLEKMIRNAVMIENEKVDGNVVSLGKTVRLMELPDGEEEEYTIVGSAESDPFEGKISNDSPMAQSLLGKTVNDRVVVNTPGGEMEVEILEIR</sequence>
<proteinExistence type="inferred from homology"/>
<gene>
    <name evidence="1" type="primary">greA</name>
    <name type="ordered locus">ABC1599</name>
</gene>
<evidence type="ECO:0000255" key="1">
    <source>
        <dbReference type="HAMAP-Rule" id="MF_00105"/>
    </source>
</evidence>
<feature type="chain" id="PRO_1000034249" description="Transcription elongation factor GreA">
    <location>
        <begin position="1"/>
        <end position="158"/>
    </location>
</feature>
<feature type="coiled-coil region" evidence="1">
    <location>
        <begin position="48"/>
        <end position="75"/>
    </location>
</feature>